<organism>
    <name type="scientific">Danio rerio</name>
    <name type="common">Zebrafish</name>
    <name type="synonym">Brachydanio rerio</name>
    <dbReference type="NCBI Taxonomy" id="7955"/>
    <lineage>
        <taxon>Eukaryota</taxon>
        <taxon>Metazoa</taxon>
        <taxon>Chordata</taxon>
        <taxon>Craniata</taxon>
        <taxon>Vertebrata</taxon>
        <taxon>Euteleostomi</taxon>
        <taxon>Actinopterygii</taxon>
        <taxon>Neopterygii</taxon>
        <taxon>Teleostei</taxon>
        <taxon>Ostariophysi</taxon>
        <taxon>Cypriniformes</taxon>
        <taxon>Danionidae</taxon>
        <taxon>Danioninae</taxon>
        <taxon>Danio</taxon>
    </lineage>
</organism>
<accession>Q6AXJ7</accession>
<keyword id="KW-0175">Coiled coil</keyword>
<keyword id="KW-1185">Reference proteome</keyword>
<comment type="similarity">
    <text evidence="3">Belongs to the FAM199 family.</text>
</comment>
<evidence type="ECO:0000255" key="1"/>
<evidence type="ECO:0000256" key="2">
    <source>
        <dbReference type="SAM" id="MobiDB-lite"/>
    </source>
</evidence>
<evidence type="ECO:0000305" key="3"/>
<feature type="chain" id="PRO_0000251212" description="Protein FAM199X">
    <location>
        <begin position="1"/>
        <end position="374"/>
    </location>
</feature>
<feature type="region of interest" description="Disordered" evidence="2">
    <location>
        <begin position="238"/>
        <end position="343"/>
    </location>
</feature>
<feature type="coiled-coil region" evidence="1">
    <location>
        <begin position="317"/>
        <end position="346"/>
    </location>
</feature>
<feature type="compositionally biased region" description="Low complexity" evidence="2">
    <location>
        <begin position="261"/>
        <end position="295"/>
    </location>
</feature>
<feature type="compositionally biased region" description="Basic residues" evidence="2">
    <location>
        <begin position="315"/>
        <end position="334"/>
    </location>
</feature>
<protein>
    <recommendedName>
        <fullName>Protein FAM199X</fullName>
    </recommendedName>
</protein>
<gene>
    <name type="primary">fam199x</name>
    <name type="ORF">zgc:101060</name>
</gene>
<name>F199X_DANRE</name>
<proteinExistence type="evidence at transcript level"/>
<reference key="1">
    <citation type="submission" date="2004-08" db="EMBL/GenBank/DDBJ databases">
        <authorList>
            <consortium name="NIH - Zebrafish Gene Collection (ZGC) project"/>
        </authorList>
    </citation>
    <scope>NUCLEOTIDE SEQUENCE [LARGE SCALE MRNA]</scope>
    <source>
        <tissue>Embryo</tissue>
    </source>
</reference>
<sequence>MSEGVYEKFLAPEEPFPLLSQRGNFSEDATLDVSDFGCQLSSCHRTDPLHRFHSSRWNLTSCGTSVASSECSEELFSSVSVGDQDDCYSLLDDQELTSFDLFPEGSVCSDVSSSISTYWDWSDSEFEWQLPGSDIASGSDVLSDIIPSVPSSPCLVSKRKSKPHRNLDELPWSAMTNDEQVEYIEYLSRKVSTEMGLREQLDIIKIIDPSAQILPTDSEFIIELNCLTDEKLKQVRSYIREHSPRQRPNITRDNWKRSMASNGSTSGVSAHSSSNASMVSSTSSSTASTGSNSSTNISRAHSDGNLATAAERIRDSKKRSKQRKMQQKALRKRQLKEQRQARKERLSGLFMNEEVLSLKVTEEEDHCDDVDVLM</sequence>
<dbReference type="EMBL" id="BC079509">
    <property type="protein sequence ID" value="AAH79509.1"/>
    <property type="molecule type" value="mRNA"/>
</dbReference>
<dbReference type="RefSeq" id="NP_001003766.1">
    <property type="nucleotide sequence ID" value="NM_001003766.2"/>
</dbReference>
<dbReference type="FunCoup" id="Q6AXJ7">
    <property type="interactions" value="1771"/>
</dbReference>
<dbReference type="STRING" id="7955.ENSDARP00000017054"/>
<dbReference type="PaxDb" id="7955-ENSDARP00000017054"/>
<dbReference type="Ensembl" id="ENSDART00000003879">
    <property type="protein sequence ID" value="ENSDARP00000017054"/>
    <property type="gene ID" value="ENSDARG00000009982"/>
</dbReference>
<dbReference type="GeneID" id="445309"/>
<dbReference type="KEGG" id="dre:445309"/>
<dbReference type="AGR" id="ZFIN:ZDB-GENE-040808-24"/>
<dbReference type="CTD" id="139231"/>
<dbReference type="ZFIN" id="ZDB-GENE-040808-24">
    <property type="gene designation" value="fam199x"/>
</dbReference>
<dbReference type="eggNOG" id="ENOG502QR59">
    <property type="taxonomic scope" value="Eukaryota"/>
</dbReference>
<dbReference type="HOGENOM" id="CLU_061935_0_0_1"/>
<dbReference type="InParanoid" id="Q6AXJ7"/>
<dbReference type="OMA" id="PWKRSSY"/>
<dbReference type="OrthoDB" id="6365484at2759"/>
<dbReference type="PhylomeDB" id="Q6AXJ7"/>
<dbReference type="PRO" id="PR:Q6AXJ7"/>
<dbReference type="Proteomes" id="UP000000437">
    <property type="component" value="Chromosome 14"/>
</dbReference>
<dbReference type="Bgee" id="ENSDARG00000009982">
    <property type="expression patterns" value="Expressed in swim bladder and 20 other cell types or tissues"/>
</dbReference>
<dbReference type="InterPro" id="IPR029672">
    <property type="entry name" value="FAM199X_fam"/>
</dbReference>
<dbReference type="PANTHER" id="PTHR32003">
    <property type="entry name" value="PROTEIN FAM199X"/>
    <property type="match status" value="1"/>
</dbReference>
<dbReference type="PANTHER" id="PTHR32003:SF1">
    <property type="entry name" value="PROTEIN FAM199X"/>
    <property type="match status" value="1"/>
</dbReference>
<dbReference type="Pfam" id="PF15814">
    <property type="entry name" value="FAM199X"/>
    <property type="match status" value="1"/>
</dbReference>